<comment type="function">
    <text evidence="1">Translational regulator that ensures constant high levels of translation upon a variety of stress conditions, such as amino acid starvation, UV-C irradiation, proteasome inhibitor treatment and glucose deprivation. Plays a role as a negative regulator of the EIF2AK4/GCN2 kinase activity; impairs GCN1-mediated EIF2AK4/GCN2 activation, and hence EIF2AK4/GCN2-mediated eIF-2-alpha phosphorylation and subsequent down-regulation of protein synthesis. Plays a role in differentiation of neuronal cells by stimulating neurite outgrowth.</text>
</comment>
<comment type="subunit">
    <text evidence="1">Interacts with GCN1; prevents the interaction of GCN1 with EIF2AK4/GCN2 and inhibits EIF2AK4/GCN2 kinase activity. Interaction with RPL39; this interaction occurs in a GCN1-independent manner. Associates with ribosomes; this interaction occurs in a GCN1-independent manner. Associates with actin; this interaction occurs in a GCN1-independent manner.</text>
</comment>
<comment type="subcellular location">
    <subcellularLocation>
        <location evidence="1">Cytoplasm</location>
    </subcellularLocation>
</comment>
<comment type="tissue specificity">
    <text evidence="4">Ubiquitous both in embryo and adult.</text>
</comment>
<comment type="developmental stage">
    <text evidence="4">Present in oocytes as well as in early embryos.</text>
</comment>
<comment type="miscellaneous">
    <text>In contrast to the mouse or rabbit ortholog, the IMPACT locus is not imprinted in Xenopus.</text>
</comment>
<comment type="similarity">
    <text evidence="5">Belongs to the IMPACT family.</text>
</comment>
<comment type="sequence caution" evidence="5">
    <conflict type="erroneous initiation">
        <sequence resource="EMBL-CDS" id="AAH99309"/>
    </conflict>
</comment>
<name>IMPCT_XENLA</name>
<evidence type="ECO:0000250" key="1">
    <source>
        <dbReference type="UniProtKB" id="O55091"/>
    </source>
</evidence>
<evidence type="ECO:0000255" key="2">
    <source>
        <dbReference type="PROSITE-ProRule" id="PRU00179"/>
    </source>
</evidence>
<evidence type="ECO:0000256" key="3">
    <source>
        <dbReference type="SAM" id="MobiDB-lite"/>
    </source>
</evidence>
<evidence type="ECO:0000269" key="4">
    <source>
    </source>
</evidence>
<evidence type="ECO:0000305" key="5"/>
<proteinExistence type="evidence at transcript level"/>
<sequence>MADTEEENVQRQIDEVEALTSIYGDEWCVIDEAERIFCITISDSSNKPTWTLCLQVILPPDYPVASPPLYQLNAPWLRGEDRLTLSNCLEEMYLQNLGENILYQWVEKIREFLVEKSQTSDPGPSLKSTSEETDVGDDCEVSTDELTESFKNSMIFGMNYSSGVEEIPPIVHGETISDRRSTFQAHLAPVVSPYQVKLILNKLYENKKIATATHNIYAYRIYIKERNSFIQDCEDDGETAAGKRMLHLMQILDARDVMVVVSRWYGGILLGPDRFKHINNCARNVLMEHNYCSTVEESSKQTSKSKKSSQRK</sequence>
<keyword id="KW-0963">Cytoplasm</keyword>
<keyword id="KW-0221">Differentiation</keyword>
<keyword id="KW-0524">Neurogenesis</keyword>
<keyword id="KW-1185">Reference proteome</keyword>
<keyword id="KW-0678">Repressor</keyword>
<keyword id="KW-0346">Stress response</keyword>
<keyword id="KW-0810">Translation regulation</keyword>
<accession>Q9W625</accession>
<accession>Q4KLB3</accession>
<reference key="1">
    <citation type="journal article" date="1999" name="Biochem. Biophys. Res. Commun.">
        <title>Spatiotemporal, allelic, and enforced expression of Ximpact, the Xenopus homolog of mouse imprinted gene impact.</title>
        <authorList>
            <person name="Yamada Y."/>
            <person name="Hagiwara Y."/>
            <person name="Shiokawa K."/>
            <person name="Sakaki Y."/>
            <person name="Ito T."/>
        </authorList>
    </citation>
    <scope>NUCLEOTIDE SEQUENCE [MRNA]</scope>
    <scope>LACK OF IMPRINTING</scope>
    <scope>TISSUE SPECIFICITY</scope>
    <scope>DEVELOPMENTAL STAGE</scope>
</reference>
<reference key="2">
    <citation type="submission" date="2005-07" db="EMBL/GenBank/DDBJ databases">
        <authorList>
            <consortium name="NIH - Xenopus Gene Collection (XGC) project"/>
        </authorList>
    </citation>
    <scope>NUCLEOTIDE SEQUENCE [LARGE SCALE MRNA]</scope>
</reference>
<protein>
    <recommendedName>
        <fullName>Protein IMPACT</fullName>
    </recommendedName>
    <alternativeName>
        <fullName>Imprinted and ancient gene protein homolog</fullName>
    </alternativeName>
    <alternativeName>
        <fullName>Ximpact</fullName>
    </alternativeName>
</protein>
<organism>
    <name type="scientific">Xenopus laevis</name>
    <name type="common">African clawed frog</name>
    <dbReference type="NCBI Taxonomy" id="8355"/>
    <lineage>
        <taxon>Eukaryota</taxon>
        <taxon>Metazoa</taxon>
        <taxon>Chordata</taxon>
        <taxon>Craniata</taxon>
        <taxon>Vertebrata</taxon>
        <taxon>Euteleostomi</taxon>
        <taxon>Amphibia</taxon>
        <taxon>Batrachia</taxon>
        <taxon>Anura</taxon>
        <taxon>Pipoidea</taxon>
        <taxon>Pipidae</taxon>
        <taxon>Xenopodinae</taxon>
        <taxon>Xenopus</taxon>
        <taxon>Xenopus</taxon>
    </lineage>
</organism>
<dbReference type="EMBL" id="AB020319">
    <property type="protein sequence ID" value="BAA76409.1"/>
    <property type="molecule type" value="mRNA"/>
</dbReference>
<dbReference type="EMBL" id="BC099309">
    <property type="protein sequence ID" value="AAH99309.1"/>
    <property type="status" value="ALT_INIT"/>
    <property type="molecule type" value="mRNA"/>
</dbReference>
<dbReference type="RefSeq" id="NP_001079068.1">
    <property type="nucleotide sequence ID" value="NM_001085599.1"/>
</dbReference>
<dbReference type="SMR" id="Q9W625"/>
<dbReference type="BioGRID" id="96821">
    <property type="interactions" value="1"/>
</dbReference>
<dbReference type="IntAct" id="Q9W625">
    <property type="interactions" value="1"/>
</dbReference>
<dbReference type="GeneID" id="373600"/>
<dbReference type="KEGG" id="xla:373600"/>
<dbReference type="AGR" id="Xenbase:XB-GENE-947996"/>
<dbReference type="CTD" id="373600"/>
<dbReference type="Xenbase" id="XB-GENE-947996">
    <property type="gene designation" value="impact.L"/>
</dbReference>
<dbReference type="OrthoDB" id="69641at2759"/>
<dbReference type="Proteomes" id="UP000186698">
    <property type="component" value="Chromosome 6L"/>
</dbReference>
<dbReference type="Bgee" id="373600">
    <property type="expression patterns" value="Expressed in muscle tissue and 19 other cell types or tissues"/>
</dbReference>
<dbReference type="GO" id="GO:0005737">
    <property type="term" value="C:cytoplasm"/>
    <property type="evidence" value="ECO:0000250"/>
    <property type="project" value="UniProtKB"/>
</dbReference>
<dbReference type="GO" id="GO:0140311">
    <property type="term" value="F:protein sequestering activity"/>
    <property type="evidence" value="ECO:0000250"/>
    <property type="project" value="UniProtKB"/>
</dbReference>
<dbReference type="GO" id="GO:0034198">
    <property type="term" value="P:cellular response to amino acid starvation"/>
    <property type="evidence" value="ECO:0000250"/>
    <property type="project" value="UniProtKB"/>
</dbReference>
<dbReference type="GO" id="GO:0140469">
    <property type="term" value="P:GCN2-mediated signaling"/>
    <property type="evidence" value="ECO:0000250"/>
    <property type="project" value="UniProtKB"/>
</dbReference>
<dbReference type="GO" id="GO:0035556">
    <property type="term" value="P:intracellular signal transduction"/>
    <property type="evidence" value="ECO:0000250"/>
    <property type="project" value="UniProtKB"/>
</dbReference>
<dbReference type="GO" id="GO:0000122">
    <property type="term" value="P:negative regulation of transcription by RNA polymerase II"/>
    <property type="evidence" value="ECO:0000250"/>
    <property type="project" value="UniProtKB"/>
</dbReference>
<dbReference type="GO" id="GO:1990138">
    <property type="term" value="P:neuron projection extension"/>
    <property type="evidence" value="ECO:0000250"/>
    <property type="project" value="UniProtKB"/>
</dbReference>
<dbReference type="GO" id="GO:0045666">
    <property type="term" value="P:positive regulation of neuron differentiation"/>
    <property type="evidence" value="ECO:0000250"/>
    <property type="project" value="UniProtKB"/>
</dbReference>
<dbReference type="GO" id="GO:1990611">
    <property type="term" value="P:regulation of cytoplasmic translational initiation in response to stress"/>
    <property type="evidence" value="ECO:0000250"/>
    <property type="project" value="UniProtKB"/>
</dbReference>
<dbReference type="GO" id="GO:0006446">
    <property type="term" value="P:regulation of translational initiation"/>
    <property type="evidence" value="ECO:0000318"/>
    <property type="project" value="GO_Central"/>
</dbReference>
<dbReference type="CDD" id="cd23821">
    <property type="entry name" value="RWD_IMPACT"/>
    <property type="match status" value="1"/>
</dbReference>
<dbReference type="FunFam" id="3.10.110.10:FF:000066">
    <property type="entry name" value="IMPACT isoform 1"/>
    <property type="match status" value="1"/>
</dbReference>
<dbReference type="FunFam" id="3.30.230.30:FF:000001">
    <property type="entry name" value="IMPACT isoform 1"/>
    <property type="match status" value="1"/>
</dbReference>
<dbReference type="Gene3D" id="3.30.230.30">
    <property type="entry name" value="Impact, N-terminal domain"/>
    <property type="match status" value="1"/>
</dbReference>
<dbReference type="Gene3D" id="3.10.110.10">
    <property type="entry name" value="Ubiquitin Conjugating Enzyme"/>
    <property type="match status" value="1"/>
</dbReference>
<dbReference type="InterPro" id="IPR023582">
    <property type="entry name" value="Impact"/>
</dbReference>
<dbReference type="InterPro" id="IPR001498">
    <property type="entry name" value="Impact_N"/>
</dbReference>
<dbReference type="InterPro" id="IPR036956">
    <property type="entry name" value="Impact_N_sf"/>
</dbReference>
<dbReference type="InterPro" id="IPR020568">
    <property type="entry name" value="Ribosomal_Su5_D2-typ_SF"/>
</dbReference>
<dbReference type="InterPro" id="IPR006575">
    <property type="entry name" value="RWD_dom"/>
</dbReference>
<dbReference type="InterPro" id="IPR016135">
    <property type="entry name" value="UBQ-conjugating_enzyme/RWD"/>
</dbReference>
<dbReference type="PANTHER" id="PTHR16301">
    <property type="entry name" value="IMPACT-RELATED"/>
    <property type="match status" value="1"/>
</dbReference>
<dbReference type="PANTHER" id="PTHR16301:SF27">
    <property type="entry name" value="PROTEIN IMPACT"/>
    <property type="match status" value="1"/>
</dbReference>
<dbReference type="Pfam" id="PF05773">
    <property type="entry name" value="RWD"/>
    <property type="match status" value="1"/>
</dbReference>
<dbReference type="Pfam" id="PF01205">
    <property type="entry name" value="UPF0029"/>
    <property type="match status" value="1"/>
</dbReference>
<dbReference type="SMART" id="SM00591">
    <property type="entry name" value="RWD"/>
    <property type="match status" value="1"/>
</dbReference>
<dbReference type="SUPFAM" id="SSF54211">
    <property type="entry name" value="Ribosomal protein S5 domain 2-like"/>
    <property type="match status" value="1"/>
</dbReference>
<dbReference type="SUPFAM" id="SSF54495">
    <property type="entry name" value="UBC-like"/>
    <property type="match status" value="1"/>
</dbReference>
<dbReference type="PROSITE" id="PS50908">
    <property type="entry name" value="RWD"/>
    <property type="match status" value="1"/>
</dbReference>
<gene>
    <name type="primary">impact</name>
</gene>
<feature type="chain" id="PRO_0000330855" description="Protein IMPACT">
    <location>
        <begin position="1"/>
        <end position="312"/>
    </location>
</feature>
<feature type="domain" description="RWD" evidence="2">
    <location>
        <begin position="14"/>
        <end position="116"/>
    </location>
</feature>
<feature type="region of interest" description="Disordered" evidence="3">
    <location>
        <begin position="118"/>
        <end position="138"/>
    </location>
</feature>
<feature type="compositionally biased region" description="Polar residues" evidence="3">
    <location>
        <begin position="118"/>
        <end position="128"/>
    </location>
</feature>